<name>CBHA_ASPOR</name>
<reference key="1">
    <citation type="submission" date="2002-08" db="EMBL/GenBank/DDBJ databases">
        <title>Molecular cloning of two cellobiohydrolases from Aspergillus oryzae KBN616.</title>
        <authorList>
            <person name="Kitamoto N."/>
            <person name="Yoshino-Yasuda S."/>
        </authorList>
    </citation>
    <scope>NUCLEOTIDE SEQUENCE [GENOMIC DNA]</scope>
</reference>
<reference key="2">
    <citation type="journal article" date="2005" name="Nature">
        <title>Genome sequencing and analysis of Aspergillus oryzae.</title>
        <authorList>
            <person name="Machida M."/>
            <person name="Asai K."/>
            <person name="Sano M."/>
            <person name="Tanaka T."/>
            <person name="Kumagai T."/>
            <person name="Terai G."/>
            <person name="Kusumoto K."/>
            <person name="Arima T."/>
            <person name="Akita O."/>
            <person name="Kashiwagi Y."/>
            <person name="Abe K."/>
            <person name="Gomi K."/>
            <person name="Horiuchi H."/>
            <person name="Kitamoto K."/>
            <person name="Kobayashi T."/>
            <person name="Takeuchi M."/>
            <person name="Denning D.W."/>
            <person name="Galagan J.E."/>
            <person name="Nierman W.C."/>
            <person name="Yu J."/>
            <person name="Archer D.B."/>
            <person name="Bennett J.W."/>
            <person name="Bhatnagar D."/>
            <person name="Cleveland T.E."/>
            <person name="Fedorova N.D."/>
            <person name="Gotoh O."/>
            <person name="Horikawa H."/>
            <person name="Hosoyama A."/>
            <person name="Ichinomiya M."/>
            <person name="Igarashi R."/>
            <person name="Iwashita K."/>
            <person name="Juvvadi P.R."/>
            <person name="Kato M."/>
            <person name="Kato Y."/>
            <person name="Kin T."/>
            <person name="Kokubun A."/>
            <person name="Maeda H."/>
            <person name="Maeyama N."/>
            <person name="Maruyama J."/>
            <person name="Nagasaki H."/>
            <person name="Nakajima T."/>
            <person name="Oda K."/>
            <person name="Okada K."/>
            <person name="Paulsen I."/>
            <person name="Sakamoto K."/>
            <person name="Sawano T."/>
            <person name="Takahashi M."/>
            <person name="Takase K."/>
            <person name="Terabayashi Y."/>
            <person name="Wortman J.R."/>
            <person name="Yamada O."/>
            <person name="Yamagata Y."/>
            <person name="Anazawa H."/>
            <person name="Hata Y."/>
            <person name="Koide Y."/>
            <person name="Komori T."/>
            <person name="Koyama Y."/>
            <person name="Minetoki T."/>
            <person name="Suharnan S."/>
            <person name="Tanaka A."/>
            <person name="Isono K."/>
            <person name="Kuhara S."/>
            <person name="Ogasawara N."/>
            <person name="Kikuchi H."/>
        </authorList>
    </citation>
    <scope>NUCLEOTIDE SEQUENCE [LARGE SCALE GENOMIC DNA]</scope>
    <source>
        <strain>ATCC 42149 / RIB 40</strain>
    </source>
</reference>
<dbReference type="EC" id="3.2.1.91"/>
<dbReference type="EMBL" id="AB089437">
    <property type="protein sequence ID" value="BAC07256.1"/>
    <property type="status" value="ALT_SEQ"/>
    <property type="molecule type" value="Genomic_DNA"/>
</dbReference>
<dbReference type="EMBL" id="BA000052">
    <property type="protein sequence ID" value="BAE61042.1"/>
    <property type="molecule type" value="Genomic_DNA"/>
</dbReference>
<dbReference type="SMR" id="Q2UBM3"/>
<dbReference type="STRING" id="510516.Q2UBM3"/>
<dbReference type="CAZy" id="GH7">
    <property type="family name" value="Glycoside Hydrolase Family 7"/>
</dbReference>
<dbReference type="GlyCosmos" id="Q2UBM3">
    <property type="glycosylation" value="2 sites, No reported glycans"/>
</dbReference>
<dbReference type="EnsemblFungi" id="BAE61042">
    <property type="protein sequence ID" value="BAE61042"/>
    <property type="gene ID" value="AO090012000941"/>
</dbReference>
<dbReference type="VEuPathDB" id="FungiDB:AO090012000941"/>
<dbReference type="HOGENOM" id="CLU_020817_3_2_1"/>
<dbReference type="OMA" id="NTYQMFQ"/>
<dbReference type="Proteomes" id="UP000006564">
    <property type="component" value="Chromosome 4"/>
</dbReference>
<dbReference type="GO" id="GO:0005576">
    <property type="term" value="C:extracellular region"/>
    <property type="evidence" value="ECO:0007669"/>
    <property type="project" value="UniProtKB-SubCell"/>
</dbReference>
<dbReference type="GO" id="GO:0016162">
    <property type="term" value="F:cellulose 1,4-beta-cellobiosidase activity"/>
    <property type="evidence" value="ECO:0007669"/>
    <property type="project" value="UniProtKB-EC"/>
</dbReference>
<dbReference type="GO" id="GO:0030245">
    <property type="term" value="P:cellulose catabolic process"/>
    <property type="evidence" value="ECO:0007669"/>
    <property type="project" value="UniProtKB-KW"/>
</dbReference>
<dbReference type="CDD" id="cd07999">
    <property type="entry name" value="GH7_CBH_EG"/>
    <property type="match status" value="1"/>
</dbReference>
<dbReference type="FunFam" id="2.70.100.10:FF:000001">
    <property type="entry name" value="Glucanase"/>
    <property type="match status" value="1"/>
</dbReference>
<dbReference type="Gene3D" id="2.70.100.10">
    <property type="entry name" value="Glycoside hydrolase, family 7, domain"/>
    <property type="match status" value="1"/>
</dbReference>
<dbReference type="InterPro" id="IPR013320">
    <property type="entry name" value="ConA-like_dom_sf"/>
</dbReference>
<dbReference type="InterPro" id="IPR001722">
    <property type="entry name" value="Glyco_hydro_7"/>
</dbReference>
<dbReference type="InterPro" id="IPR037019">
    <property type="entry name" value="Glyco_hydro_7_sf"/>
</dbReference>
<dbReference type="PANTHER" id="PTHR33753:SF6">
    <property type="entry name" value="1,4-BETA-D-GLUCAN CELLOBIOHYDROLASE A-RELATED"/>
    <property type="match status" value="1"/>
</dbReference>
<dbReference type="PANTHER" id="PTHR33753">
    <property type="entry name" value="1,4-BETA-D-GLUCAN CELLOBIOHYDROLASE B"/>
    <property type="match status" value="1"/>
</dbReference>
<dbReference type="Pfam" id="PF00840">
    <property type="entry name" value="Glyco_hydro_7"/>
    <property type="match status" value="1"/>
</dbReference>
<dbReference type="PRINTS" id="PR00734">
    <property type="entry name" value="GLHYDRLASE7"/>
</dbReference>
<dbReference type="SUPFAM" id="SSF49899">
    <property type="entry name" value="Concanavalin A-like lectins/glucanases"/>
    <property type="match status" value="1"/>
</dbReference>
<evidence type="ECO:0000250" key="1"/>
<evidence type="ECO:0000255" key="2"/>
<evidence type="ECO:0000305" key="3"/>
<keyword id="KW-0119">Carbohydrate metabolism</keyword>
<keyword id="KW-0136">Cellulose degradation</keyword>
<keyword id="KW-0325">Glycoprotein</keyword>
<keyword id="KW-0326">Glycosidase</keyword>
<keyword id="KW-0378">Hydrolase</keyword>
<keyword id="KW-0624">Polysaccharide degradation</keyword>
<keyword id="KW-1185">Reference proteome</keyword>
<keyword id="KW-0964">Secreted</keyword>
<keyword id="KW-0732">Signal</keyword>
<accession>Q2UBM3</accession>
<accession>Q8NK81</accession>
<protein>
    <recommendedName>
        <fullName>Probable 1,4-beta-D-glucan cellobiohydrolase A</fullName>
        <ecNumber>3.2.1.91</ecNumber>
    </recommendedName>
    <alternativeName>
        <fullName>Beta-glucancellobiohydrolase A</fullName>
    </alternativeName>
    <alternativeName>
        <fullName>Cellobiohydrolase D</fullName>
    </alternativeName>
    <alternativeName>
        <fullName>Exocellobiohydrolase A</fullName>
    </alternativeName>
    <alternativeName>
        <fullName>Exoglucanase A</fullName>
    </alternativeName>
</protein>
<comment type="function">
    <text evidence="1">The biological conversion of cellulose to glucose generally requires three types of hydrolytic enzymes: (1) Endoglucanases which cut internal beta-1,4-glucosidic bonds; (2) Exocellobiohydrolases that cut the disaccharide cellobiose from the non-reducing end of the cellulose polymer chain; (3) Beta-1,4-glucosidases which hydrolyze the cellobiose and other short cello-oligosaccharides to glucose.</text>
</comment>
<comment type="catalytic activity">
    <reaction>
        <text>Hydrolysis of (1-&gt;4)-beta-D-glucosidic linkages in cellulose and cellotetraose, releasing cellobiose from the non-reducing ends of the chains.</text>
        <dbReference type="EC" id="3.2.1.91"/>
    </reaction>
</comment>
<comment type="subcellular location">
    <subcellularLocation>
        <location evidence="3">Secreted</location>
    </subcellularLocation>
</comment>
<comment type="similarity">
    <text evidence="3">Belongs to the glycosyl hydrolase 7 (cellulase C) family.</text>
</comment>
<comment type="sequence caution" evidence="3">
    <conflict type="erroneous gene model prediction">
        <sequence resource="EMBL-CDS" id="BAC07256"/>
    </conflict>
</comment>
<organism>
    <name type="scientific">Aspergillus oryzae (strain ATCC 42149 / RIB 40)</name>
    <name type="common">Yellow koji mold</name>
    <dbReference type="NCBI Taxonomy" id="510516"/>
    <lineage>
        <taxon>Eukaryota</taxon>
        <taxon>Fungi</taxon>
        <taxon>Dikarya</taxon>
        <taxon>Ascomycota</taxon>
        <taxon>Pezizomycotina</taxon>
        <taxon>Eurotiomycetes</taxon>
        <taxon>Eurotiomycetidae</taxon>
        <taxon>Eurotiales</taxon>
        <taxon>Aspergillaceae</taxon>
        <taxon>Aspergillus</taxon>
        <taxon>Aspergillus subgen. Circumdati</taxon>
    </lineage>
</organism>
<gene>
    <name type="primary">cbhA</name>
    <name type="synonym">celD</name>
    <name type="ORF">AO090012000941</name>
</gene>
<feature type="signal peptide" evidence="2">
    <location>
        <begin position="1"/>
        <end position="17"/>
    </location>
</feature>
<feature type="chain" id="PRO_0000393542" description="Probable 1,4-beta-D-glucan cellobiohydrolase A">
    <location>
        <begin position="18"/>
        <end position="455"/>
    </location>
</feature>
<feature type="active site" description="Nucleophile" evidence="1">
    <location>
        <position position="227"/>
    </location>
</feature>
<feature type="active site" description="Proton donor" evidence="1">
    <location>
        <position position="232"/>
    </location>
</feature>
<feature type="glycosylation site" description="N-linked (GlcNAc...) asparagine" evidence="2">
    <location>
        <position position="81"/>
    </location>
</feature>
<feature type="glycosylation site" description="N-linked (GlcNAc...) asparagine" evidence="2">
    <location>
        <position position="285"/>
    </location>
</feature>
<feature type="sequence conflict" description="In Ref. 1; BAC07256." evidence="3" ref="1">
    <original>E</original>
    <variation>Q</variation>
    <location>
        <position position="227"/>
    </location>
</feature>
<proteinExistence type="inferred from homology"/>
<sequence>MHQRALLFSAFWTAVQAQQAGTLTAETHPSLTWQKCAAGGTCTEQKGSVVLDSNWRWLHSVDGSTNCYTGNTWDATLCPDNESCASNCALDGADYEGTYGVTTSGDALTLQFVTGANIGSRLYLMADDDESYQTFNLLNNEFTFDVDASKLPCGLNGAVYFVSMDADGGVAKYSTNKAGAKYGTGYCDSQCPRDLKFINGQANVEGWEPSDSDKNAGVGGHGSCCPEMDIWEANSISTAYTPHPCDDTAQTMCEGDTCGGTYSSERYAGTCDPDGCDFNAYRMGNESFYGPSKLVDSSSPVTVVTQFITADGTDSGALSEIKRFYVQGGKVIANAASNVDGVTGNSITADFCTAQKKAFGDDDIFAQHGGLQGMGNALSSMVLTLSIWDDHHSSMMWLDSSYPEDADATAPGVARGTCEPHAGDPEKVESQSGSATVTYSNIKYGPIGSTFDAPA</sequence>